<feature type="chain" id="PRO_0000312217" description="GTPase-activating Rap/Ran-GAP domain-like protein 3">
    <location>
        <begin position="1"/>
        <end position="917"/>
    </location>
</feature>
<feature type="domain" description="Rap-GAP" evidence="1">
    <location>
        <begin position="185"/>
        <end position="401"/>
    </location>
</feature>
<feature type="domain" description="CNH" evidence="2">
    <location>
        <begin position="483"/>
        <end position="792"/>
    </location>
</feature>
<proteinExistence type="evidence at transcript level"/>
<organism>
    <name type="scientific">Gallus gallus</name>
    <name type="common">Chicken</name>
    <dbReference type="NCBI Taxonomy" id="9031"/>
    <lineage>
        <taxon>Eukaryota</taxon>
        <taxon>Metazoa</taxon>
        <taxon>Chordata</taxon>
        <taxon>Craniata</taxon>
        <taxon>Vertebrata</taxon>
        <taxon>Euteleostomi</taxon>
        <taxon>Archelosauria</taxon>
        <taxon>Archosauria</taxon>
        <taxon>Dinosauria</taxon>
        <taxon>Saurischia</taxon>
        <taxon>Theropoda</taxon>
        <taxon>Coelurosauria</taxon>
        <taxon>Aves</taxon>
        <taxon>Neognathae</taxon>
        <taxon>Galloanserae</taxon>
        <taxon>Galliformes</taxon>
        <taxon>Phasianidae</taxon>
        <taxon>Phasianinae</taxon>
        <taxon>Gallus</taxon>
    </lineage>
</organism>
<comment type="similarity">
    <text evidence="3">Belongs to the GARNL3 family.</text>
</comment>
<keyword id="KW-0343">GTPase activation</keyword>
<keyword id="KW-1185">Reference proteome</keyword>
<reference key="1">
    <citation type="journal article" date="2005" name="Genome Biol.">
        <title>Full-length cDNAs from chicken bursal lymphocytes to facilitate gene function analysis.</title>
        <authorList>
            <person name="Caldwell R.B."/>
            <person name="Kierzek A.M."/>
            <person name="Arakawa H."/>
            <person name="Bezzubov Y."/>
            <person name="Zaim J."/>
            <person name="Fiedler P."/>
            <person name="Kutter S."/>
            <person name="Blagodatski A."/>
            <person name="Kostovska D."/>
            <person name="Koter M."/>
            <person name="Plachy J."/>
            <person name="Carninci P."/>
            <person name="Hayashizaki Y."/>
            <person name="Buerstedde J.-M."/>
        </authorList>
    </citation>
    <scope>NUCLEOTIDE SEQUENCE [LARGE SCALE MRNA]</scope>
    <source>
        <strain>CB</strain>
        <tissue>Bursa of Fabricius</tissue>
    </source>
</reference>
<sequence>MELSSAEAVSTRFLGLTQRSVSEDLGCRRGEFSRKHYGSVELLISSDADGAIQRAGRFRVENGSSDENTGYTPGTWHRTDVHLENPEYYTRWYFKYFLGKVHQNYIGTDSEKNPFFLSVVLSDQNNQRVPQYHSILWRKTGTQKICLPYSPTKTLSVKSILSAMSLEKFEKGPREIFHPDIQKDLLVLEEQEGSVNFKFGVLYAKDGQLTDDEMFSNETGSESFQRFLHLLGDTITLKGWTGYRGGLDTKNDTTGTFSIYTVYQGHEIMFHVSTMLPYSRENKQQVERKRHIGNDIVTIVFQEGEETAPAFKPSMIRSHFTHIFALVRYNKQNDSYRLKIFSEESVPLFGPPLPSPPVFTNHQEFRDFVLVKLINGEKATLETPTFSQKRQRTLDMLIRSLYQDLMPDLHKNMLNRRSFSDVLPDSPKSTRKKEEARQAEFVRLGQALKLKTGVKGDAPTTLATTSFCKKEPWESQSFCSNFPHEVVCADSWGQSLLVSTDAGILLIDDGQTTVQVFDKTLQIKQMHVLEALDYLIARTDKGKDSRLLVFRLSSVQKDIETKQVIRSKYDCRENKLERTKGCHLYAINTHHSSELRIVVAIRNKLLLITKKYNPCNSLTGSSLSLSESPVEEFQYIREICLSDPPVVMTLVDGPTGDSDNMICVAYRHQFDLVNESTGESYRLHHIEANKVNFVAAIDVYEDGEAGLLLCYNYVCQYRKVYPFNGGSPLIQPSAYDFHFSWNQVPYAVVCAFPYILAFTTDSIEIRLVVNGNLVHTAVVPELQLVASRSDIYFKATAAVSGSSHSSSKEMSSRSSPQTPTAYDMLECSLSSSEGEVACKNLYKIPLSNLVGRSIERPLKSPLTPKVVTTPTSSGITSLPVTHSPSLSRMEIKEIANRTRKELLGKLPLFFSVYISYH</sequence>
<gene>
    <name type="primary">GARNL3</name>
    <name type="ORF">RCJMB04_14h1</name>
</gene>
<accession>Q5ZJY3</accession>
<protein>
    <recommendedName>
        <fullName>GTPase-activating Rap/Ran-GAP domain-like protein 3</fullName>
    </recommendedName>
</protein>
<dbReference type="EMBL" id="AJ720301">
    <property type="protein sequence ID" value="CAG31960.1"/>
    <property type="molecule type" value="mRNA"/>
</dbReference>
<dbReference type="RefSeq" id="NP_001025847.1">
    <property type="nucleotide sequence ID" value="NM_001030676.2"/>
</dbReference>
<dbReference type="SMR" id="Q5ZJY3"/>
<dbReference type="FunCoup" id="Q5ZJY3">
    <property type="interactions" value="438"/>
</dbReference>
<dbReference type="STRING" id="9031.ENSGALP00000068978"/>
<dbReference type="GlyGen" id="Q5ZJY3">
    <property type="glycosylation" value="1 site"/>
</dbReference>
<dbReference type="PaxDb" id="9031-ENSGALP00000001241"/>
<dbReference type="GeneID" id="417087"/>
<dbReference type="KEGG" id="gga:417087"/>
<dbReference type="CTD" id="84253"/>
<dbReference type="VEuPathDB" id="HostDB:geneid_417087"/>
<dbReference type="eggNOG" id="KOG3686">
    <property type="taxonomic scope" value="Eukaryota"/>
</dbReference>
<dbReference type="InParanoid" id="Q5ZJY3"/>
<dbReference type="OrthoDB" id="2499658at2759"/>
<dbReference type="PhylomeDB" id="Q5ZJY3"/>
<dbReference type="PRO" id="PR:Q5ZJY3"/>
<dbReference type="Proteomes" id="UP000000539">
    <property type="component" value="Unassembled WGS sequence"/>
</dbReference>
<dbReference type="GO" id="GO:0005096">
    <property type="term" value="F:GTPase activator activity"/>
    <property type="evidence" value="ECO:0007669"/>
    <property type="project" value="UniProtKB-KW"/>
</dbReference>
<dbReference type="GO" id="GO:0051056">
    <property type="term" value="P:regulation of small GTPase mediated signal transduction"/>
    <property type="evidence" value="ECO:0007669"/>
    <property type="project" value="InterPro"/>
</dbReference>
<dbReference type="FunFam" id="3.40.50.11210:FF:000006">
    <property type="entry name" value="GTPase-activating Rap/Ran-GAP domain-like protein 3 isoform X1"/>
    <property type="match status" value="1"/>
</dbReference>
<dbReference type="Gene3D" id="3.40.50.11210">
    <property type="entry name" value="Rap/Ran-GAP"/>
    <property type="match status" value="1"/>
</dbReference>
<dbReference type="InterPro" id="IPR001180">
    <property type="entry name" value="CNH_dom"/>
</dbReference>
<dbReference type="InterPro" id="IPR035974">
    <property type="entry name" value="Rap/Ran-GAP_sf"/>
</dbReference>
<dbReference type="InterPro" id="IPR000331">
    <property type="entry name" value="Rap/Ran_GAP_dom"/>
</dbReference>
<dbReference type="InterPro" id="IPR050989">
    <property type="entry name" value="Rap1_Ran_GAP"/>
</dbReference>
<dbReference type="PANTHER" id="PTHR15711:SF62">
    <property type="entry name" value="GTPASE-ACTIVATING RAP_RAN-GAP DOMAIN-LIKE PROTEIN 3"/>
    <property type="match status" value="1"/>
</dbReference>
<dbReference type="PANTHER" id="PTHR15711">
    <property type="entry name" value="RAP GTPASE-ACTIVATING PROTEIN"/>
    <property type="match status" value="1"/>
</dbReference>
<dbReference type="Pfam" id="PF00780">
    <property type="entry name" value="CNH"/>
    <property type="match status" value="1"/>
</dbReference>
<dbReference type="Pfam" id="PF02145">
    <property type="entry name" value="Rap_GAP"/>
    <property type="match status" value="1"/>
</dbReference>
<dbReference type="SMART" id="SM00036">
    <property type="entry name" value="CNH"/>
    <property type="match status" value="1"/>
</dbReference>
<dbReference type="SUPFAM" id="SSF111347">
    <property type="entry name" value="Rap/Ran-GAP"/>
    <property type="match status" value="1"/>
</dbReference>
<dbReference type="PROSITE" id="PS50219">
    <property type="entry name" value="CNH"/>
    <property type="match status" value="1"/>
</dbReference>
<dbReference type="PROSITE" id="PS50085">
    <property type="entry name" value="RAPGAP"/>
    <property type="match status" value="1"/>
</dbReference>
<evidence type="ECO:0000255" key="1">
    <source>
        <dbReference type="PROSITE-ProRule" id="PRU00165"/>
    </source>
</evidence>
<evidence type="ECO:0000255" key="2">
    <source>
        <dbReference type="PROSITE-ProRule" id="PRU00795"/>
    </source>
</evidence>
<evidence type="ECO:0000305" key="3"/>
<name>GARL3_CHICK</name>